<sequence>MFGAELVGRETGGQSTDQPYSYRDSARTWDTVTQSVLKAPGWEDSYAVITIEADKHGNGAHQETVAPSDLRQYAKLANASQILYAPLIFVTKLSIFLLYLRVFASARRGMTYLSIHLLIWFNLAFYLANFFLKIFQCIPRAKIWDSNTSGHCININIPILVTAAINVVSDLLMLCLPIICVWRLQMSIRRKLGISAIFAAGIFGCFASIMRLEVSVRDRNTKDPTYDWYTEITCGILASCLPALPTFFRHFFGKARTMLSRSRTRGSSNRSQDRSLEKATELYTLTYPRGQKHHIITDNRLIDQDRELDDDRTQIFSGPSYAVTEARVEGRTPLGQRAYHGDDTVLNGEDGSGHCRGILKVVEVDVESGPGHPTVKCRCDNW</sequence>
<proteinExistence type="inferred from homology"/>
<dbReference type="EMBL" id="AACD01000077">
    <property type="protein sequence ID" value="EAA60217.1"/>
    <property type="status" value="ALT_SEQ"/>
    <property type="molecule type" value="Genomic_DNA"/>
</dbReference>
<dbReference type="EMBL" id="BN001303">
    <property type="protein sequence ID" value="CBF77490.1"/>
    <property type="status" value="ALT_SEQ"/>
    <property type="molecule type" value="Genomic_DNA"/>
</dbReference>
<dbReference type="RefSeq" id="XP_662056.1">
    <property type="nucleotide sequence ID" value="XM_656964.1"/>
</dbReference>
<dbReference type="EnsemblFungi" id="CBF77490">
    <property type="protein sequence ID" value="CBF77490"/>
    <property type="gene ID" value="ANIA_04452"/>
</dbReference>
<dbReference type="KEGG" id="ani:ANIA_04452"/>
<dbReference type="InParanoid" id="P9WEU1"/>
<dbReference type="OrthoDB" id="5342292at2759"/>
<dbReference type="Proteomes" id="UP000000560">
    <property type="component" value="Chromosome III"/>
</dbReference>
<dbReference type="GO" id="GO:0016020">
    <property type="term" value="C:membrane"/>
    <property type="evidence" value="ECO:0007669"/>
    <property type="project" value="UniProtKB-SubCell"/>
</dbReference>
<dbReference type="InterPro" id="IPR049326">
    <property type="entry name" value="Rhodopsin_dom_fungi"/>
</dbReference>
<dbReference type="InterPro" id="IPR052337">
    <property type="entry name" value="SAT4-like"/>
</dbReference>
<dbReference type="PANTHER" id="PTHR33048">
    <property type="entry name" value="PTH11-LIKE INTEGRAL MEMBRANE PROTEIN (AFU_ORTHOLOGUE AFUA_5G11245)"/>
    <property type="match status" value="1"/>
</dbReference>
<dbReference type="PANTHER" id="PTHR33048:SF160">
    <property type="entry name" value="SAT4 FAMILY MEMBRANE PROTEIN"/>
    <property type="match status" value="1"/>
</dbReference>
<dbReference type="Pfam" id="PF20684">
    <property type="entry name" value="Fung_rhodopsin"/>
    <property type="match status" value="1"/>
</dbReference>
<name>SAT4_EMENI</name>
<accession>P9WEU1</accession>
<accession>A0A1U8QU64</accession>
<accession>C8V8I8</accession>
<accession>Q5B4S8</accession>
<reference key="1">
    <citation type="journal article" date="2005" name="Nature">
        <title>Sequencing of Aspergillus nidulans and comparative analysis with A. fumigatus and A. oryzae.</title>
        <authorList>
            <person name="Galagan J.E."/>
            <person name="Calvo S.E."/>
            <person name="Cuomo C."/>
            <person name="Ma L.-J."/>
            <person name="Wortman J.R."/>
            <person name="Batzoglou S."/>
            <person name="Lee S.-I."/>
            <person name="Bastuerkmen M."/>
            <person name="Spevak C.C."/>
            <person name="Clutterbuck J."/>
            <person name="Kapitonov V."/>
            <person name="Jurka J."/>
            <person name="Scazzocchio C."/>
            <person name="Farman M.L."/>
            <person name="Butler J."/>
            <person name="Purcell S."/>
            <person name="Harris S."/>
            <person name="Braus G.H."/>
            <person name="Draht O."/>
            <person name="Busch S."/>
            <person name="D'Enfert C."/>
            <person name="Bouchier C."/>
            <person name="Goldman G.H."/>
            <person name="Bell-Pedersen D."/>
            <person name="Griffiths-Jones S."/>
            <person name="Doonan J.H."/>
            <person name="Yu J."/>
            <person name="Vienken K."/>
            <person name="Pain A."/>
            <person name="Freitag M."/>
            <person name="Selker E.U."/>
            <person name="Archer D.B."/>
            <person name="Penalva M.A."/>
            <person name="Oakley B.R."/>
            <person name="Momany M."/>
            <person name="Tanaka T."/>
            <person name="Kumagai T."/>
            <person name="Asai K."/>
            <person name="Machida M."/>
            <person name="Nierman W.C."/>
            <person name="Denning D.W."/>
            <person name="Caddick M.X."/>
            <person name="Hynes M."/>
            <person name="Paoletti M."/>
            <person name="Fischer R."/>
            <person name="Miller B.L."/>
            <person name="Dyer P.S."/>
            <person name="Sachs M.S."/>
            <person name="Osmani S.A."/>
            <person name="Birren B.W."/>
        </authorList>
    </citation>
    <scope>NUCLEOTIDE SEQUENCE [LARGE SCALE GENOMIC DNA]</scope>
    <source>
        <strain>FGSC A4 / ATCC 38163 / CBS 112.46 / NRRL 194 / M139</strain>
    </source>
</reference>
<reference key="2">
    <citation type="journal article" date="2009" name="Fungal Genet. Biol.">
        <title>The 2008 update of the Aspergillus nidulans genome annotation: a community effort.</title>
        <authorList>
            <person name="Wortman J.R."/>
            <person name="Gilsenan J.M."/>
            <person name="Joardar V."/>
            <person name="Deegan J."/>
            <person name="Clutterbuck J."/>
            <person name="Andersen M.R."/>
            <person name="Archer D."/>
            <person name="Bencina M."/>
            <person name="Braus G."/>
            <person name="Coutinho P."/>
            <person name="von Dohren H."/>
            <person name="Doonan J."/>
            <person name="Driessen A.J."/>
            <person name="Durek P."/>
            <person name="Espeso E."/>
            <person name="Fekete E."/>
            <person name="Flipphi M."/>
            <person name="Estrada C.G."/>
            <person name="Geysens S."/>
            <person name="Goldman G."/>
            <person name="de Groot P.W."/>
            <person name="Hansen K."/>
            <person name="Harris S.D."/>
            <person name="Heinekamp T."/>
            <person name="Helmstaedt K."/>
            <person name="Henrissat B."/>
            <person name="Hofmann G."/>
            <person name="Homan T."/>
            <person name="Horio T."/>
            <person name="Horiuchi H."/>
            <person name="James S."/>
            <person name="Jones M."/>
            <person name="Karaffa L."/>
            <person name="Karanyi Z."/>
            <person name="Kato M."/>
            <person name="Keller N."/>
            <person name="Kelly D.E."/>
            <person name="Kiel J.A."/>
            <person name="Kim J.M."/>
            <person name="van der Klei I.J."/>
            <person name="Klis F.M."/>
            <person name="Kovalchuk A."/>
            <person name="Krasevec N."/>
            <person name="Kubicek C.P."/>
            <person name="Liu B."/>
            <person name="Maccabe A."/>
            <person name="Meyer V."/>
            <person name="Mirabito P."/>
            <person name="Miskei M."/>
            <person name="Mos M."/>
            <person name="Mullins J."/>
            <person name="Nelson D.R."/>
            <person name="Nielsen J."/>
            <person name="Oakley B.R."/>
            <person name="Osmani S.A."/>
            <person name="Pakula T."/>
            <person name="Paszewski A."/>
            <person name="Paulsen I."/>
            <person name="Pilsyk S."/>
            <person name="Pocsi I."/>
            <person name="Punt P.J."/>
            <person name="Ram A.F."/>
            <person name="Ren Q."/>
            <person name="Robellet X."/>
            <person name="Robson G."/>
            <person name="Seiboth B."/>
            <person name="van Solingen P."/>
            <person name="Specht T."/>
            <person name="Sun J."/>
            <person name="Taheri-Talesh N."/>
            <person name="Takeshita N."/>
            <person name="Ussery D."/>
            <person name="vanKuyk P.A."/>
            <person name="Visser H."/>
            <person name="van de Vondervoort P.J."/>
            <person name="de Vries R.P."/>
            <person name="Walton J."/>
            <person name="Xiang X."/>
            <person name="Xiong Y."/>
            <person name="Zeng A.P."/>
            <person name="Brandt B.W."/>
            <person name="Cornell M.J."/>
            <person name="van den Hondel C.A."/>
            <person name="Visser J."/>
            <person name="Oliver S.G."/>
            <person name="Turner G."/>
        </authorList>
    </citation>
    <scope>GENOME REANNOTATION</scope>
    <source>
        <strain>FGSC A4 / ATCC 38163 / CBS 112.46 / NRRL 194 / M139</strain>
    </source>
</reference>
<feature type="chain" id="PRO_0000453676" description="SAT4 family membrane protein">
    <location>
        <begin position="1"/>
        <end position="382"/>
    </location>
</feature>
<feature type="transmembrane region" description="Helical" evidence="1">
    <location>
        <begin position="80"/>
        <end position="100"/>
    </location>
</feature>
<feature type="transmembrane region" description="Helical" evidence="1">
    <location>
        <begin position="112"/>
        <end position="132"/>
    </location>
</feature>
<feature type="transmembrane region" description="Helical" evidence="1">
    <location>
        <begin position="159"/>
        <end position="179"/>
    </location>
</feature>
<feature type="transmembrane region" description="Helical" evidence="1">
    <location>
        <begin position="192"/>
        <end position="212"/>
    </location>
</feature>
<feature type="transmembrane region" description="Helical" evidence="1">
    <location>
        <begin position="228"/>
        <end position="248"/>
    </location>
</feature>
<feature type="region of interest" description="Disordered" evidence="3">
    <location>
        <begin position="1"/>
        <end position="22"/>
    </location>
</feature>
<feature type="glycosylation site" description="N-linked (GlcNAc...) asparagine" evidence="2">
    <location>
        <position position="78"/>
    </location>
</feature>
<feature type="glycosylation site" description="N-linked (GlcNAc...) asparagine" evidence="2">
    <location>
        <position position="147"/>
    </location>
</feature>
<feature type="glycosylation site" description="N-linked (GlcNAc...) asparagine" evidence="2">
    <location>
        <position position="269"/>
    </location>
</feature>
<gene>
    <name type="ORF">AN4452-1</name>
    <name type="ORF">ANIA_04452-1</name>
</gene>
<protein>
    <recommendedName>
        <fullName evidence="4">SAT4 family membrane protein</fullName>
    </recommendedName>
</protein>
<organism>
    <name type="scientific">Emericella nidulans (strain FGSC A4 / ATCC 38163 / CBS 112.46 / NRRL 194 / M139)</name>
    <name type="common">Aspergillus nidulans</name>
    <dbReference type="NCBI Taxonomy" id="227321"/>
    <lineage>
        <taxon>Eukaryota</taxon>
        <taxon>Fungi</taxon>
        <taxon>Dikarya</taxon>
        <taxon>Ascomycota</taxon>
        <taxon>Pezizomycotina</taxon>
        <taxon>Eurotiomycetes</taxon>
        <taxon>Eurotiomycetidae</taxon>
        <taxon>Eurotiales</taxon>
        <taxon>Aspergillaceae</taxon>
        <taxon>Aspergillus</taxon>
        <taxon>Aspergillus subgen. Nidulantes</taxon>
    </lineage>
</organism>
<evidence type="ECO:0000255" key="1"/>
<evidence type="ECO:0000255" key="2">
    <source>
        <dbReference type="PROSITE-ProRule" id="PRU00498"/>
    </source>
</evidence>
<evidence type="ECO:0000256" key="3">
    <source>
        <dbReference type="SAM" id="MobiDB-lite"/>
    </source>
</evidence>
<evidence type="ECO:0000305" key="4"/>
<comment type="subcellular location">
    <subcellularLocation>
        <location evidence="1">Membrane</location>
        <topology evidence="1">Multi-pass membrane protein</topology>
    </subcellularLocation>
</comment>
<comment type="similarity">
    <text evidence="4">Belongs to the SAT4 family.</text>
</comment>
<comment type="sequence caution" evidence="4">
    <conflict type="erroneous gene model prediction">
        <sequence resource="EMBL-CDS" id="CBF77490"/>
    </conflict>
    <text>The predicted gene ANIA_04452 has been split into 2 genes: ANIA_04452-1 and ANIA_04452-2.</text>
</comment>
<comment type="sequence caution" evidence="4">
    <conflict type="erroneous gene model prediction">
        <sequence resource="EMBL-CDS" id="EAA60217"/>
    </conflict>
    <text>The predicted gene ANIA_04452 has been split into 2 genes: ANIA_04452-1 and ANIA_04452-2.</text>
</comment>
<keyword id="KW-0325">Glycoprotein</keyword>
<keyword id="KW-0472">Membrane</keyword>
<keyword id="KW-1185">Reference proteome</keyword>
<keyword id="KW-0812">Transmembrane</keyword>
<keyword id="KW-1133">Transmembrane helix</keyword>